<dbReference type="EMBL" id="AC006232">
    <property type="protein sequence ID" value="AAM15189.1"/>
    <property type="status" value="ALT_SEQ"/>
    <property type="molecule type" value="Genomic_DNA"/>
</dbReference>
<dbReference type="EMBL" id="AC006233">
    <property type="protein sequence ID" value="AAD41990.1"/>
    <property type="status" value="ALT_SEQ"/>
    <property type="molecule type" value="Genomic_DNA"/>
</dbReference>
<dbReference type="EMBL" id="CP002685">
    <property type="protein sequence ID" value="AEC07994.1"/>
    <property type="molecule type" value="Genomic_DNA"/>
</dbReference>
<dbReference type="PIR" id="E84672">
    <property type="entry name" value="E84672"/>
</dbReference>
<dbReference type="RefSeq" id="NP_180310.2">
    <property type="nucleotide sequence ID" value="NM_128301.2"/>
</dbReference>
<dbReference type="PaxDb" id="3702-AT2G27410.1"/>
<dbReference type="EnsemblPlants" id="AT2G27410.1">
    <property type="protein sequence ID" value="AT2G27410.1"/>
    <property type="gene ID" value="AT2G27410"/>
</dbReference>
<dbReference type="GeneID" id="817286"/>
<dbReference type="Gramene" id="AT2G27410.1">
    <property type="protein sequence ID" value="AT2G27410.1"/>
    <property type="gene ID" value="AT2G27410"/>
</dbReference>
<dbReference type="KEGG" id="ath:AT2G27410"/>
<dbReference type="Araport" id="AT2G27410"/>
<dbReference type="TAIR" id="AT2G27410"/>
<dbReference type="eggNOG" id="ENOG502S4WY">
    <property type="taxonomic scope" value="Eukaryota"/>
</dbReference>
<dbReference type="HOGENOM" id="CLU_067429_0_0_1"/>
<dbReference type="InParanoid" id="Q9XIP5"/>
<dbReference type="OMA" id="CTIDKQS"/>
<dbReference type="PRO" id="PR:Q9XIP5"/>
<dbReference type="Proteomes" id="UP000006548">
    <property type="component" value="Chromosome 2"/>
</dbReference>
<dbReference type="ExpressionAtlas" id="Q9XIP5">
    <property type="expression patterns" value="baseline and differential"/>
</dbReference>
<dbReference type="GO" id="GO:0005634">
    <property type="term" value="C:nucleus"/>
    <property type="evidence" value="ECO:0007669"/>
    <property type="project" value="UniProtKB-SubCell"/>
</dbReference>
<dbReference type="GO" id="GO:0003677">
    <property type="term" value="F:DNA binding"/>
    <property type="evidence" value="ECO:0007669"/>
    <property type="project" value="UniProtKB-KW"/>
</dbReference>
<dbReference type="Gene3D" id="2.40.330.10">
    <property type="entry name" value="DNA-binding pseudobarrel domain"/>
    <property type="match status" value="1"/>
</dbReference>
<dbReference type="InterPro" id="IPR005508">
    <property type="entry name" value="At2g31720-like"/>
</dbReference>
<dbReference type="InterPro" id="IPR015300">
    <property type="entry name" value="DNA-bd_pseudobarrel_sf"/>
</dbReference>
<dbReference type="PANTHER" id="PTHR31541">
    <property type="entry name" value="B3 DOMAIN PLANT PROTEIN-RELATED"/>
    <property type="match status" value="1"/>
</dbReference>
<dbReference type="PANTHER" id="PTHR31541:SF56">
    <property type="entry name" value="DOMAIN PROTEIN, PUTATIVE (DUF313)-RELATED"/>
    <property type="match status" value="1"/>
</dbReference>
<dbReference type="Pfam" id="PF03754">
    <property type="entry name" value="At2g31720-like"/>
    <property type="match status" value="1"/>
</dbReference>
<dbReference type="SUPFAM" id="SSF101936">
    <property type="entry name" value="DNA-binding pseudobarrel domain"/>
    <property type="match status" value="1"/>
</dbReference>
<proteinExistence type="inferred from homology"/>
<organism>
    <name type="scientific">Arabidopsis thaliana</name>
    <name type="common">Mouse-ear cress</name>
    <dbReference type="NCBI Taxonomy" id="3702"/>
    <lineage>
        <taxon>Eukaryota</taxon>
        <taxon>Viridiplantae</taxon>
        <taxon>Streptophyta</taxon>
        <taxon>Embryophyta</taxon>
        <taxon>Tracheophyta</taxon>
        <taxon>Spermatophyta</taxon>
        <taxon>Magnoliopsida</taxon>
        <taxon>eudicotyledons</taxon>
        <taxon>Gunneridae</taxon>
        <taxon>Pentapetalae</taxon>
        <taxon>rosids</taxon>
        <taxon>malvids</taxon>
        <taxon>Brassicales</taxon>
        <taxon>Brassicaceae</taxon>
        <taxon>Camelineae</taxon>
        <taxon>Arabidopsis</taxon>
    </lineage>
</organism>
<name>Y2741_ARATH</name>
<feature type="chain" id="PRO_0000412848" description="Putative B3 domain-containing protein At2g27410">
    <location>
        <begin position="1"/>
        <end position="257"/>
    </location>
</feature>
<feature type="DNA-binding region" description="TF-B3">
    <location>
        <begin position="115"/>
        <end position="209"/>
    </location>
</feature>
<feature type="region of interest" description="Disordered" evidence="2">
    <location>
        <begin position="5"/>
        <end position="50"/>
    </location>
</feature>
<feature type="region of interest" description="Disordered" evidence="2">
    <location>
        <begin position="212"/>
        <end position="257"/>
    </location>
</feature>
<feature type="compositionally biased region" description="Polar residues" evidence="2">
    <location>
        <begin position="8"/>
        <end position="35"/>
    </location>
</feature>
<feature type="compositionally biased region" description="Low complexity" evidence="2">
    <location>
        <begin position="241"/>
        <end position="257"/>
    </location>
</feature>
<sequence>MYACARTTKINHFRGTSTTQNPNRGLEPSPSSYVTRRSKEKRPINVEKRSHKKRKIICPLEEEPIQTTPPEWLLNVMRREENGYNPKLISTRQLYKTDLKKTEARLSVPFKQVKTPDFLTEDETRIIHENAMKIRDNGVPVNFVDPELNKHVLELRKWKMKGNWIYVFVKGWKNVLDACKTLFKEDDVYPLWSFRSGTGKLCFALTPKNSGRGNSLPGGDGASTSGESGQVPLPIPPARYSSNSGQGCSGESSSSSS</sequence>
<evidence type="ECO:0000250" key="1"/>
<evidence type="ECO:0000256" key="2">
    <source>
        <dbReference type="SAM" id="MobiDB-lite"/>
    </source>
</evidence>
<evidence type="ECO:0000305" key="3"/>
<keyword id="KW-0238">DNA-binding</keyword>
<keyword id="KW-0539">Nucleus</keyword>
<keyword id="KW-1185">Reference proteome</keyword>
<keyword id="KW-0804">Transcription</keyword>
<keyword id="KW-0805">Transcription regulation</keyword>
<reference key="1">
    <citation type="journal article" date="1999" name="Nature">
        <title>Sequence and analysis of chromosome 2 of the plant Arabidopsis thaliana.</title>
        <authorList>
            <person name="Lin X."/>
            <person name="Kaul S."/>
            <person name="Rounsley S.D."/>
            <person name="Shea T.P."/>
            <person name="Benito M.-I."/>
            <person name="Town C.D."/>
            <person name="Fujii C.Y."/>
            <person name="Mason T.M."/>
            <person name="Bowman C.L."/>
            <person name="Barnstead M.E."/>
            <person name="Feldblyum T.V."/>
            <person name="Buell C.R."/>
            <person name="Ketchum K.A."/>
            <person name="Lee J.J."/>
            <person name="Ronning C.M."/>
            <person name="Koo H.L."/>
            <person name="Moffat K.S."/>
            <person name="Cronin L.A."/>
            <person name="Shen M."/>
            <person name="Pai G."/>
            <person name="Van Aken S."/>
            <person name="Umayam L."/>
            <person name="Tallon L.J."/>
            <person name="Gill J.E."/>
            <person name="Adams M.D."/>
            <person name="Carrera A.J."/>
            <person name="Creasy T.H."/>
            <person name="Goodman H.M."/>
            <person name="Somerville C.R."/>
            <person name="Copenhaver G.P."/>
            <person name="Preuss D."/>
            <person name="Nierman W.C."/>
            <person name="White O."/>
            <person name="Eisen J.A."/>
            <person name="Salzberg S.L."/>
            <person name="Fraser C.M."/>
            <person name="Venter J.C."/>
        </authorList>
    </citation>
    <scope>NUCLEOTIDE SEQUENCE [LARGE SCALE GENOMIC DNA]</scope>
    <source>
        <strain>cv. Columbia</strain>
    </source>
</reference>
<reference key="2">
    <citation type="journal article" date="2017" name="Plant J.">
        <title>Araport11: a complete reannotation of the Arabidopsis thaliana reference genome.</title>
        <authorList>
            <person name="Cheng C.Y."/>
            <person name="Krishnakumar V."/>
            <person name="Chan A.P."/>
            <person name="Thibaud-Nissen F."/>
            <person name="Schobel S."/>
            <person name="Town C.D."/>
        </authorList>
    </citation>
    <scope>GENOME REANNOTATION</scope>
    <source>
        <strain>cv. Columbia</strain>
    </source>
</reference>
<reference key="3">
    <citation type="journal article" date="2008" name="Trends Plant Sci.">
        <title>The plant B3 superfamily.</title>
        <authorList>
            <person name="Swaminathan K."/>
            <person name="Peterson K."/>
            <person name="Jack T."/>
        </authorList>
    </citation>
    <scope>GENE FAMILY</scope>
</reference>
<gene>
    <name type="ordered locus">At2g27410</name>
    <name type="ORF">F10A12</name>
    <name type="ORF">F12K2.1</name>
</gene>
<comment type="subcellular location">
    <subcellularLocation>
        <location evidence="1">Nucleus</location>
    </subcellularLocation>
</comment>
<comment type="sequence caution" evidence="3">
    <conflict type="erroneous gene model prediction">
        <sequence resource="EMBL-CDS" id="AAD41990"/>
    </conflict>
</comment>
<comment type="sequence caution" evidence="3">
    <conflict type="erroneous gene model prediction">
        <sequence resource="EMBL-CDS" id="AAM15189"/>
    </conflict>
</comment>
<protein>
    <recommendedName>
        <fullName>Putative B3 domain-containing protein At2g27410</fullName>
    </recommendedName>
</protein>
<accession>Q9XIP5</accession>
<accession>F4IFU0</accession>